<proteinExistence type="inferred from homology"/>
<sequence>MTLLGTALRPAATRVMLLGSGELGKEVAIECQRLGVEVIAVDRYADAPAMHVAHRSHVINMLDGDALRRVVELEKPHYIVPEIEAIATDMLIQLEEEGLNVVPCARATKLTMNREGIRRLAAEELQLPTSTYRFADSESLFREAVADIGYPCIVKPVMSSSGKGQTFIRSAEQLAQAWKYAQQGGRAGAGRVIVEGVVKFDFEITLLTVSAVDGVHFCAPVGHRQEDGDYRESWQPQQMSPLALERAQEIARKVVLALGGYGLFGVELFVCGDEVIFSEVSPRPHDTGMVTLISQDLSEFALHVRAFLGLPVGGIRQYGPAASAVILPQLTSQNVTFDNVQNAVGADLQIRLFGKPEIDGSRRLGVALATAESVVDAIERAKHAAGQVKVQG</sequence>
<evidence type="ECO:0000255" key="1">
    <source>
        <dbReference type="HAMAP-Rule" id="MF_01643"/>
    </source>
</evidence>
<name>PURT_SHISS</name>
<dbReference type="EC" id="6.3.1.21" evidence="1"/>
<dbReference type="EMBL" id="CP000038">
    <property type="protein sequence ID" value="AAZ88012.1"/>
    <property type="molecule type" value="Genomic_DNA"/>
</dbReference>
<dbReference type="RefSeq" id="WP_000173484.1">
    <property type="nucleotide sequence ID" value="NC_007384.1"/>
</dbReference>
<dbReference type="SMR" id="Q3Z2K0"/>
<dbReference type="GeneID" id="93776116"/>
<dbReference type="KEGG" id="ssn:SSON_1299"/>
<dbReference type="HOGENOM" id="CLU_011534_1_3_6"/>
<dbReference type="UniPathway" id="UPA00074">
    <property type="reaction ID" value="UER00127"/>
</dbReference>
<dbReference type="Proteomes" id="UP000002529">
    <property type="component" value="Chromosome"/>
</dbReference>
<dbReference type="GO" id="GO:0005829">
    <property type="term" value="C:cytosol"/>
    <property type="evidence" value="ECO:0007669"/>
    <property type="project" value="TreeGrafter"/>
</dbReference>
<dbReference type="GO" id="GO:0005524">
    <property type="term" value="F:ATP binding"/>
    <property type="evidence" value="ECO:0007669"/>
    <property type="project" value="UniProtKB-UniRule"/>
</dbReference>
<dbReference type="GO" id="GO:0000287">
    <property type="term" value="F:magnesium ion binding"/>
    <property type="evidence" value="ECO:0007669"/>
    <property type="project" value="InterPro"/>
</dbReference>
<dbReference type="GO" id="GO:0043815">
    <property type="term" value="F:phosphoribosylglycinamide formyltransferase 2 activity"/>
    <property type="evidence" value="ECO:0007669"/>
    <property type="project" value="UniProtKB-UniRule"/>
</dbReference>
<dbReference type="GO" id="GO:0004644">
    <property type="term" value="F:phosphoribosylglycinamide formyltransferase activity"/>
    <property type="evidence" value="ECO:0007669"/>
    <property type="project" value="InterPro"/>
</dbReference>
<dbReference type="GO" id="GO:0006189">
    <property type="term" value="P:'de novo' IMP biosynthetic process"/>
    <property type="evidence" value="ECO:0007669"/>
    <property type="project" value="UniProtKB-UniRule"/>
</dbReference>
<dbReference type="FunFam" id="3.30.1490.20:FF:000013">
    <property type="entry name" value="Formate-dependent phosphoribosylglycinamide formyltransferase"/>
    <property type="match status" value="1"/>
</dbReference>
<dbReference type="FunFam" id="3.30.470.20:FF:000027">
    <property type="entry name" value="Formate-dependent phosphoribosylglycinamide formyltransferase"/>
    <property type="match status" value="1"/>
</dbReference>
<dbReference type="FunFam" id="3.40.50.20:FF:000007">
    <property type="entry name" value="Formate-dependent phosphoribosylglycinamide formyltransferase"/>
    <property type="match status" value="1"/>
</dbReference>
<dbReference type="Gene3D" id="3.40.50.20">
    <property type="match status" value="1"/>
</dbReference>
<dbReference type="Gene3D" id="3.30.1490.20">
    <property type="entry name" value="ATP-grasp fold, A domain"/>
    <property type="match status" value="1"/>
</dbReference>
<dbReference type="Gene3D" id="3.30.470.20">
    <property type="entry name" value="ATP-grasp fold, B domain"/>
    <property type="match status" value="1"/>
</dbReference>
<dbReference type="HAMAP" id="MF_01643">
    <property type="entry name" value="PurT"/>
    <property type="match status" value="1"/>
</dbReference>
<dbReference type="InterPro" id="IPR011761">
    <property type="entry name" value="ATP-grasp"/>
</dbReference>
<dbReference type="InterPro" id="IPR003135">
    <property type="entry name" value="ATP-grasp_carboxylate-amine"/>
</dbReference>
<dbReference type="InterPro" id="IPR013815">
    <property type="entry name" value="ATP_grasp_subdomain_1"/>
</dbReference>
<dbReference type="InterPro" id="IPR016185">
    <property type="entry name" value="PreATP-grasp_dom_sf"/>
</dbReference>
<dbReference type="InterPro" id="IPR005862">
    <property type="entry name" value="PurT"/>
</dbReference>
<dbReference type="InterPro" id="IPR054350">
    <property type="entry name" value="PurT/PurK_preATP-grasp"/>
</dbReference>
<dbReference type="InterPro" id="IPR048740">
    <property type="entry name" value="PurT_C"/>
</dbReference>
<dbReference type="InterPro" id="IPR011054">
    <property type="entry name" value="Rudment_hybrid_motif"/>
</dbReference>
<dbReference type="NCBIfam" id="NF006766">
    <property type="entry name" value="PRK09288.1"/>
    <property type="match status" value="1"/>
</dbReference>
<dbReference type="NCBIfam" id="TIGR01142">
    <property type="entry name" value="purT"/>
    <property type="match status" value="1"/>
</dbReference>
<dbReference type="PANTHER" id="PTHR43055">
    <property type="entry name" value="FORMATE-DEPENDENT PHOSPHORIBOSYLGLYCINAMIDE FORMYLTRANSFERASE"/>
    <property type="match status" value="1"/>
</dbReference>
<dbReference type="PANTHER" id="PTHR43055:SF1">
    <property type="entry name" value="FORMATE-DEPENDENT PHOSPHORIBOSYLGLYCINAMIDE FORMYLTRANSFERASE"/>
    <property type="match status" value="1"/>
</dbReference>
<dbReference type="Pfam" id="PF02222">
    <property type="entry name" value="ATP-grasp"/>
    <property type="match status" value="1"/>
</dbReference>
<dbReference type="Pfam" id="PF21244">
    <property type="entry name" value="PurT_C"/>
    <property type="match status" value="1"/>
</dbReference>
<dbReference type="Pfam" id="PF22660">
    <property type="entry name" value="RS_preATP-grasp-like"/>
    <property type="match status" value="1"/>
</dbReference>
<dbReference type="SUPFAM" id="SSF56059">
    <property type="entry name" value="Glutathione synthetase ATP-binding domain-like"/>
    <property type="match status" value="1"/>
</dbReference>
<dbReference type="SUPFAM" id="SSF52440">
    <property type="entry name" value="PreATP-grasp domain"/>
    <property type="match status" value="1"/>
</dbReference>
<dbReference type="SUPFAM" id="SSF51246">
    <property type="entry name" value="Rudiment single hybrid motif"/>
    <property type="match status" value="1"/>
</dbReference>
<dbReference type="PROSITE" id="PS50975">
    <property type="entry name" value="ATP_GRASP"/>
    <property type="match status" value="1"/>
</dbReference>
<protein>
    <recommendedName>
        <fullName evidence="1">Formate-dependent phosphoribosylglycinamide formyltransferase</fullName>
        <ecNumber evidence="1">6.3.1.21</ecNumber>
    </recommendedName>
    <alternativeName>
        <fullName evidence="1">5'-phosphoribosylglycinamide transformylase 2</fullName>
    </alternativeName>
    <alternativeName>
        <fullName evidence="1">Formate-dependent GAR transformylase</fullName>
    </alternativeName>
    <alternativeName>
        <fullName evidence="1">GAR transformylase 2</fullName>
        <shortName evidence="1">GART 2</shortName>
    </alternativeName>
    <alternativeName>
        <fullName evidence="1">Non-folate glycinamide ribonucleotide transformylase</fullName>
    </alternativeName>
    <alternativeName>
        <fullName evidence="1">Phosphoribosylglycinamide formyltransferase 2</fullName>
    </alternativeName>
</protein>
<keyword id="KW-0067">ATP-binding</keyword>
<keyword id="KW-0436">Ligase</keyword>
<keyword id="KW-0460">Magnesium</keyword>
<keyword id="KW-0479">Metal-binding</keyword>
<keyword id="KW-0547">Nucleotide-binding</keyword>
<keyword id="KW-0658">Purine biosynthesis</keyword>
<keyword id="KW-1185">Reference proteome</keyword>
<comment type="function">
    <text evidence="1">Involved in the de novo purine biosynthesis. Catalyzes the transfer of formate to 5-phospho-ribosyl-glycinamide (GAR), producing 5-phospho-ribosyl-N-formylglycinamide (FGAR). Formate is provided by PurU via hydrolysis of 10-formyl-tetrahydrofolate.</text>
</comment>
<comment type="catalytic activity">
    <reaction evidence="1">
        <text>N(1)-(5-phospho-beta-D-ribosyl)glycinamide + formate + ATP = N(2)-formyl-N(1)-(5-phospho-beta-D-ribosyl)glycinamide + ADP + phosphate + H(+)</text>
        <dbReference type="Rhea" id="RHEA:24829"/>
        <dbReference type="ChEBI" id="CHEBI:15378"/>
        <dbReference type="ChEBI" id="CHEBI:15740"/>
        <dbReference type="ChEBI" id="CHEBI:30616"/>
        <dbReference type="ChEBI" id="CHEBI:43474"/>
        <dbReference type="ChEBI" id="CHEBI:143788"/>
        <dbReference type="ChEBI" id="CHEBI:147286"/>
        <dbReference type="ChEBI" id="CHEBI:456216"/>
        <dbReference type="EC" id="6.3.1.21"/>
    </reaction>
    <physiologicalReaction direction="left-to-right" evidence="1">
        <dbReference type="Rhea" id="RHEA:24830"/>
    </physiologicalReaction>
</comment>
<comment type="pathway">
    <text evidence="1">Purine metabolism; IMP biosynthesis via de novo pathway; N(2)-formyl-N(1)-(5-phospho-D-ribosyl)glycinamide from N(1)-(5-phospho-D-ribosyl)glycinamide (formate route): step 1/1.</text>
</comment>
<comment type="subunit">
    <text evidence="1">Homodimer.</text>
</comment>
<comment type="similarity">
    <text evidence="1">Belongs to the PurK/PurT family.</text>
</comment>
<accession>Q3Z2K0</accession>
<gene>
    <name evidence="1" type="primary">purT</name>
    <name type="ordered locus">SSON_1299</name>
</gene>
<organism>
    <name type="scientific">Shigella sonnei (strain Ss046)</name>
    <dbReference type="NCBI Taxonomy" id="300269"/>
    <lineage>
        <taxon>Bacteria</taxon>
        <taxon>Pseudomonadati</taxon>
        <taxon>Pseudomonadota</taxon>
        <taxon>Gammaproteobacteria</taxon>
        <taxon>Enterobacterales</taxon>
        <taxon>Enterobacteriaceae</taxon>
        <taxon>Shigella</taxon>
    </lineage>
</organism>
<feature type="chain" id="PRO_0000319242" description="Formate-dependent phosphoribosylglycinamide formyltransferase">
    <location>
        <begin position="1"/>
        <end position="392"/>
    </location>
</feature>
<feature type="domain" description="ATP-grasp" evidence="1">
    <location>
        <begin position="119"/>
        <end position="308"/>
    </location>
</feature>
<feature type="binding site" evidence="1">
    <location>
        <begin position="22"/>
        <end position="23"/>
    </location>
    <ligand>
        <name>N(1)-(5-phospho-beta-D-ribosyl)glycinamide</name>
        <dbReference type="ChEBI" id="CHEBI:143788"/>
    </ligand>
</feature>
<feature type="binding site" evidence="1">
    <location>
        <position position="82"/>
    </location>
    <ligand>
        <name>N(1)-(5-phospho-beta-D-ribosyl)glycinamide</name>
        <dbReference type="ChEBI" id="CHEBI:143788"/>
    </ligand>
</feature>
<feature type="binding site" evidence="1">
    <location>
        <position position="114"/>
    </location>
    <ligand>
        <name>ATP</name>
        <dbReference type="ChEBI" id="CHEBI:30616"/>
    </ligand>
</feature>
<feature type="binding site" evidence="1">
    <location>
        <position position="155"/>
    </location>
    <ligand>
        <name>ATP</name>
        <dbReference type="ChEBI" id="CHEBI:30616"/>
    </ligand>
</feature>
<feature type="binding site" evidence="1">
    <location>
        <begin position="160"/>
        <end position="165"/>
    </location>
    <ligand>
        <name>ATP</name>
        <dbReference type="ChEBI" id="CHEBI:30616"/>
    </ligand>
</feature>
<feature type="binding site" evidence="1">
    <location>
        <begin position="195"/>
        <end position="198"/>
    </location>
    <ligand>
        <name>ATP</name>
        <dbReference type="ChEBI" id="CHEBI:30616"/>
    </ligand>
</feature>
<feature type="binding site" evidence="1">
    <location>
        <position position="203"/>
    </location>
    <ligand>
        <name>ATP</name>
        <dbReference type="ChEBI" id="CHEBI:30616"/>
    </ligand>
</feature>
<feature type="binding site" evidence="1">
    <location>
        <position position="267"/>
    </location>
    <ligand>
        <name>Mg(2+)</name>
        <dbReference type="ChEBI" id="CHEBI:18420"/>
    </ligand>
</feature>
<feature type="binding site" evidence="1">
    <location>
        <position position="279"/>
    </location>
    <ligand>
        <name>Mg(2+)</name>
        <dbReference type="ChEBI" id="CHEBI:18420"/>
    </ligand>
</feature>
<feature type="binding site" evidence="1">
    <location>
        <position position="286"/>
    </location>
    <ligand>
        <name>N(1)-(5-phospho-beta-D-ribosyl)glycinamide</name>
        <dbReference type="ChEBI" id="CHEBI:143788"/>
    </ligand>
</feature>
<feature type="binding site" evidence="1">
    <location>
        <position position="355"/>
    </location>
    <ligand>
        <name>N(1)-(5-phospho-beta-D-ribosyl)glycinamide</name>
        <dbReference type="ChEBI" id="CHEBI:143788"/>
    </ligand>
</feature>
<feature type="binding site" evidence="1">
    <location>
        <begin position="362"/>
        <end position="363"/>
    </location>
    <ligand>
        <name>N(1)-(5-phospho-beta-D-ribosyl)glycinamide</name>
        <dbReference type="ChEBI" id="CHEBI:143788"/>
    </ligand>
</feature>
<reference key="1">
    <citation type="journal article" date="2005" name="Nucleic Acids Res.">
        <title>Genome dynamics and diversity of Shigella species, the etiologic agents of bacillary dysentery.</title>
        <authorList>
            <person name="Yang F."/>
            <person name="Yang J."/>
            <person name="Zhang X."/>
            <person name="Chen L."/>
            <person name="Jiang Y."/>
            <person name="Yan Y."/>
            <person name="Tang X."/>
            <person name="Wang J."/>
            <person name="Xiong Z."/>
            <person name="Dong J."/>
            <person name="Xue Y."/>
            <person name="Zhu Y."/>
            <person name="Xu X."/>
            <person name="Sun L."/>
            <person name="Chen S."/>
            <person name="Nie H."/>
            <person name="Peng J."/>
            <person name="Xu J."/>
            <person name="Wang Y."/>
            <person name="Yuan Z."/>
            <person name="Wen Y."/>
            <person name="Yao Z."/>
            <person name="Shen Y."/>
            <person name="Qiang B."/>
            <person name="Hou Y."/>
            <person name="Yu J."/>
            <person name="Jin Q."/>
        </authorList>
    </citation>
    <scope>NUCLEOTIDE SEQUENCE [LARGE SCALE GENOMIC DNA]</scope>
    <source>
        <strain>Ss046</strain>
    </source>
</reference>